<keyword id="KW-0067">ATP-binding</keyword>
<keyword id="KW-0150">Chloroplast</keyword>
<keyword id="KW-0436">Ligase</keyword>
<keyword id="KW-0496">Mitochondrion</keyword>
<keyword id="KW-0547">Nucleotide-binding</keyword>
<keyword id="KW-0934">Plastid</keyword>
<keyword id="KW-0648">Protein biosynthesis</keyword>
<keyword id="KW-1185">Reference proteome</keyword>
<protein>
    <recommendedName>
        <fullName evidence="1">Glutamyl-tRNA(Gln) amidotransferase subunit B, chloroplastic/mitochondrial</fullName>
        <shortName evidence="1">Glu-AdT subunit B</shortName>
        <ecNumber evidence="1">6.3.5.-</ecNumber>
    </recommendedName>
</protein>
<accession>B9SQR9</accession>
<comment type="function">
    <text evidence="1">Allows the formation of correctly charged Gln-tRNA(Gln) through the transamidation of misacylated Glu-tRNA(Gln) in chloroplasts and mitochondria. The reaction takes place in the presence of glutamine and ATP through an activated gamma-phospho-Glu-tRNA(Gln).</text>
</comment>
<comment type="catalytic activity">
    <reaction evidence="1">
        <text>L-glutamyl-tRNA(Gln) + L-glutamine + ATP + H2O = L-glutaminyl-tRNA(Gln) + L-glutamate + ADP + phosphate + H(+)</text>
        <dbReference type="Rhea" id="RHEA:17521"/>
        <dbReference type="Rhea" id="RHEA-COMP:9681"/>
        <dbReference type="Rhea" id="RHEA-COMP:9684"/>
        <dbReference type="ChEBI" id="CHEBI:15377"/>
        <dbReference type="ChEBI" id="CHEBI:15378"/>
        <dbReference type="ChEBI" id="CHEBI:29985"/>
        <dbReference type="ChEBI" id="CHEBI:30616"/>
        <dbReference type="ChEBI" id="CHEBI:43474"/>
        <dbReference type="ChEBI" id="CHEBI:58359"/>
        <dbReference type="ChEBI" id="CHEBI:78520"/>
        <dbReference type="ChEBI" id="CHEBI:78521"/>
        <dbReference type="ChEBI" id="CHEBI:456216"/>
    </reaction>
</comment>
<comment type="subunit">
    <text evidence="1">Subunit of the heterotrimeric GatCAB amidotransferase (AdT) complex, composed of A, B and C subunits.</text>
</comment>
<comment type="subcellular location">
    <subcellularLocation>
        <location evidence="1">Mitochondrion</location>
    </subcellularLocation>
    <subcellularLocation>
        <location evidence="1">Plastid</location>
        <location evidence="1">Chloroplast</location>
    </subcellularLocation>
</comment>
<comment type="miscellaneous">
    <text evidence="1">This protein may be expected to contain an N-terminal transit peptide but none has been predicted.</text>
</comment>
<comment type="similarity">
    <text evidence="1">Belongs to the GatB/GatE family. GatB subfamily.</text>
</comment>
<gene>
    <name evidence="1" type="primary">GATB</name>
    <name type="ORF">RCOM_1216950</name>
</gene>
<organism>
    <name type="scientific">Ricinus communis</name>
    <name type="common">Castor bean</name>
    <dbReference type="NCBI Taxonomy" id="3988"/>
    <lineage>
        <taxon>Eukaryota</taxon>
        <taxon>Viridiplantae</taxon>
        <taxon>Streptophyta</taxon>
        <taxon>Embryophyta</taxon>
        <taxon>Tracheophyta</taxon>
        <taxon>Spermatophyta</taxon>
        <taxon>Magnoliopsida</taxon>
        <taxon>eudicotyledons</taxon>
        <taxon>Gunneridae</taxon>
        <taxon>Pentapetalae</taxon>
        <taxon>rosids</taxon>
        <taxon>fabids</taxon>
        <taxon>Malpighiales</taxon>
        <taxon>Euphorbiaceae</taxon>
        <taxon>Acalyphoideae</taxon>
        <taxon>Acalypheae</taxon>
        <taxon>Ricinus</taxon>
    </lineage>
</organism>
<sequence>MASTLFRNIQTHPLLLYPTSFFRRKSSVFYCTVNSTSPTATQEKQQCPRIKVSPQTQSKSLDKLTKDYETIIGIETHVQLSTLTKAFCSCPYNYGAQPNSTICPVCMGLPGALPVLNSKVIEFAVKLGLALNCKLSLNSKFDRKQYFYPDLPKGYQISQFDIPIATSGYVDLDLPVEFGGGHRRFGITRVHMEEDAGKLLHSGGGISGAIVDLNRAGVPLLEIVSEPDMRNGIEAAEYAAELQRVVRYLGVSNGNMQEGSLRCDVNVSIRPIGQSEFGTKVEIKNLNSFSSINRAIDFEISRQVLLHSQGQSDSIVQETRLWEEGAQKTVTMRKKEGLSDYRYFPEPDLPEVVLTEEYVDSIQSSLPELPETKRRRYENMGLSMQDVLFLANDTSVAEFFDATIAQGAQVKLAANWIMGDIAAYMKNEKVSINEIKLTPKELAELIASIKGGIISGKIGKEILFELIAKGGTVKGLIKEKDLVQIVDPAEIEKMVDKVLSENPKQLEQYRAGKTKLQGFFAGQVMKASKGKANPGLLNKILQEKLNAKS</sequence>
<dbReference type="EC" id="6.3.5.-" evidence="1"/>
<dbReference type="EMBL" id="EQ974090">
    <property type="protein sequence ID" value="EEF34010.1"/>
    <property type="molecule type" value="Genomic_DNA"/>
</dbReference>
<dbReference type="SMR" id="B9SQR9"/>
<dbReference type="FunCoup" id="B9SQR9">
    <property type="interactions" value="2229"/>
</dbReference>
<dbReference type="STRING" id="3988.B9SQR9"/>
<dbReference type="eggNOG" id="KOG2438">
    <property type="taxonomic scope" value="Eukaryota"/>
</dbReference>
<dbReference type="InParanoid" id="B9SQR9"/>
<dbReference type="Proteomes" id="UP000008311">
    <property type="component" value="Unassembled WGS sequence"/>
</dbReference>
<dbReference type="GO" id="GO:0009507">
    <property type="term" value="C:chloroplast"/>
    <property type="evidence" value="ECO:0007669"/>
    <property type="project" value="UniProtKB-SubCell"/>
</dbReference>
<dbReference type="GO" id="GO:0030956">
    <property type="term" value="C:glutamyl-tRNA(Gln) amidotransferase complex"/>
    <property type="evidence" value="ECO:0007669"/>
    <property type="project" value="UniProtKB-UniRule"/>
</dbReference>
<dbReference type="GO" id="GO:0005739">
    <property type="term" value="C:mitochondrion"/>
    <property type="evidence" value="ECO:0007669"/>
    <property type="project" value="UniProtKB-SubCell"/>
</dbReference>
<dbReference type="GO" id="GO:0005524">
    <property type="term" value="F:ATP binding"/>
    <property type="evidence" value="ECO:0007669"/>
    <property type="project" value="UniProtKB-KW"/>
</dbReference>
<dbReference type="GO" id="GO:0050567">
    <property type="term" value="F:glutaminyl-tRNA synthase (glutamine-hydrolyzing) activity"/>
    <property type="evidence" value="ECO:0000318"/>
    <property type="project" value="GO_Central"/>
</dbReference>
<dbReference type="GO" id="GO:0070681">
    <property type="term" value="P:glutaminyl-tRNAGln biosynthesis via transamidation"/>
    <property type="evidence" value="ECO:0000318"/>
    <property type="project" value="GO_Central"/>
</dbReference>
<dbReference type="GO" id="GO:0032543">
    <property type="term" value="P:mitochondrial translation"/>
    <property type="evidence" value="ECO:0007669"/>
    <property type="project" value="UniProtKB-UniRule"/>
</dbReference>
<dbReference type="FunFam" id="1.10.10.410:FF:000001">
    <property type="entry name" value="Aspartyl/glutamyl-tRNA(Asn/Gln) amidotransferase subunit B"/>
    <property type="match status" value="1"/>
</dbReference>
<dbReference type="FunFam" id="1.10.150.380:FF:000001">
    <property type="entry name" value="Aspartyl/glutamyl-tRNA(Asn/Gln) amidotransferase subunit B"/>
    <property type="match status" value="1"/>
</dbReference>
<dbReference type="Gene3D" id="1.10.10.410">
    <property type="match status" value="1"/>
</dbReference>
<dbReference type="Gene3D" id="1.10.150.380">
    <property type="entry name" value="GatB domain, N-terminal subdomain"/>
    <property type="match status" value="1"/>
</dbReference>
<dbReference type="HAMAP" id="MF_00121">
    <property type="entry name" value="GatB"/>
    <property type="match status" value="1"/>
</dbReference>
<dbReference type="InterPro" id="IPR017959">
    <property type="entry name" value="Asn/Gln-tRNA_amidoTrfase_suB/E"/>
</dbReference>
<dbReference type="InterPro" id="IPR006075">
    <property type="entry name" value="Asn/Gln-tRNA_Trfase_suB/E_cat"/>
</dbReference>
<dbReference type="InterPro" id="IPR018027">
    <property type="entry name" value="Asn/Gln_amidotransferase"/>
</dbReference>
<dbReference type="InterPro" id="IPR003789">
    <property type="entry name" value="Asn/Gln_tRNA_amidoTrase-B-like"/>
</dbReference>
<dbReference type="InterPro" id="IPR004413">
    <property type="entry name" value="GatB"/>
</dbReference>
<dbReference type="InterPro" id="IPR042114">
    <property type="entry name" value="GatB_C_1"/>
</dbReference>
<dbReference type="InterPro" id="IPR023168">
    <property type="entry name" value="GatB_Yqey_C_2"/>
</dbReference>
<dbReference type="InterPro" id="IPR017958">
    <property type="entry name" value="Gln-tRNA_amidoTrfase_suB_CS"/>
</dbReference>
<dbReference type="InterPro" id="IPR014746">
    <property type="entry name" value="Gln_synth/guanido_kin_cat_dom"/>
</dbReference>
<dbReference type="NCBIfam" id="TIGR00133">
    <property type="entry name" value="gatB"/>
    <property type="match status" value="1"/>
</dbReference>
<dbReference type="NCBIfam" id="NF004012">
    <property type="entry name" value="PRK05477.1-2"/>
    <property type="match status" value="1"/>
</dbReference>
<dbReference type="NCBIfam" id="NF004014">
    <property type="entry name" value="PRK05477.1-4"/>
    <property type="match status" value="1"/>
</dbReference>
<dbReference type="PANTHER" id="PTHR11659">
    <property type="entry name" value="GLUTAMYL-TRNA GLN AMIDOTRANSFERASE SUBUNIT B MITOCHONDRIAL AND PROKARYOTIC PET112-RELATED"/>
    <property type="match status" value="1"/>
</dbReference>
<dbReference type="PANTHER" id="PTHR11659:SF0">
    <property type="entry name" value="GLUTAMYL-TRNA(GLN) AMIDOTRANSFERASE SUBUNIT B, MITOCHONDRIAL"/>
    <property type="match status" value="1"/>
</dbReference>
<dbReference type="Pfam" id="PF02934">
    <property type="entry name" value="GatB_N"/>
    <property type="match status" value="1"/>
</dbReference>
<dbReference type="Pfam" id="PF02637">
    <property type="entry name" value="GatB_Yqey"/>
    <property type="match status" value="1"/>
</dbReference>
<dbReference type="SMART" id="SM00845">
    <property type="entry name" value="GatB_Yqey"/>
    <property type="match status" value="1"/>
</dbReference>
<dbReference type="SUPFAM" id="SSF89095">
    <property type="entry name" value="GatB/YqeY motif"/>
    <property type="match status" value="1"/>
</dbReference>
<dbReference type="SUPFAM" id="SSF55931">
    <property type="entry name" value="Glutamine synthetase/guanido kinase"/>
    <property type="match status" value="1"/>
</dbReference>
<dbReference type="PROSITE" id="PS01234">
    <property type="entry name" value="GATB"/>
    <property type="match status" value="1"/>
</dbReference>
<proteinExistence type="inferred from homology"/>
<name>GATB_RICCO</name>
<feature type="chain" id="PRO_0000413234" description="Glutamyl-tRNA(Gln) amidotransferase subunit B, chloroplastic/mitochondrial">
    <location>
        <begin position="1"/>
        <end position="549"/>
    </location>
</feature>
<reference key="1">
    <citation type="journal article" date="2010" name="Nat. Biotechnol.">
        <title>Draft genome sequence of the oilseed species Ricinus communis.</title>
        <authorList>
            <person name="Chan A.P."/>
            <person name="Crabtree J."/>
            <person name="Zhao Q."/>
            <person name="Lorenzi H."/>
            <person name="Orvis J."/>
            <person name="Puiu D."/>
            <person name="Melake-Berhan A."/>
            <person name="Jones K.M."/>
            <person name="Redman J."/>
            <person name="Chen G."/>
            <person name="Cahoon E.B."/>
            <person name="Gedil M."/>
            <person name="Stanke M."/>
            <person name="Haas B.J."/>
            <person name="Wortman J.R."/>
            <person name="Fraser-Liggett C.M."/>
            <person name="Ravel J."/>
            <person name="Rabinowicz P.D."/>
        </authorList>
    </citation>
    <scope>NUCLEOTIDE SEQUENCE [LARGE SCALE GENOMIC DNA]</scope>
    <source>
        <strain>cv. Hale</strain>
    </source>
</reference>
<evidence type="ECO:0000255" key="1">
    <source>
        <dbReference type="HAMAP-Rule" id="MF_03147"/>
    </source>
</evidence>